<proteinExistence type="inferred from homology"/>
<comment type="subcellular location">
    <subcellularLocation>
        <location evidence="1">Cell inner membrane</location>
        <topology evidence="1">Multi-pass membrane protein</topology>
    </subcellularLocation>
</comment>
<comment type="similarity">
    <text evidence="1">Belongs to the UPF0060 family.</text>
</comment>
<dbReference type="EMBL" id="CP001001">
    <property type="protein sequence ID" value="ACB22939.1"/>
    <property type="molecule type" value="Genomic_DNA"/>
</dbReference>
<dbReference type="RefSeq" id="WP_012317932.1">
    <property type="nucleotide sequence ID" value="NC_010505.1"/>
</dbReference>
<dbReference type="SMR" id="B1LZP1"/>
<dbReference type="STRING" id="426355.Mrad2831_0929"/>
<dbReference type="GeneID" id="6136945"/>
<dbReference type="KEGG" id="mrd:Mrad2831_0929"/>
<dbReference type="eggNOG" id="COG1742">
    <property type="taxonomic scope" value="Bacteria"/>
</dbReference>
<dbReference type="HOGENOM" id="CLU_117653_1_0_5"/>
<dbReference type="OrthoDB" id="123240at2"/>
<dbReference type="Proteomes" id="UP000006589">
    <property type="component" value="Chromosome"/>
</dbReference>
<dbReference type="GO" id="GO:0005886">
    <property type="term" value="C:plasma membrane"/>
    <property type="evidence" value="ECO:0007669"/>
    <property type="project" value="UniProtKB-SubCell"/>
</dbReference>
<dbReference type="HAMAP" id="MF_00010">
    <property type="entry name" value="UPF0060"/>
    <property type="match status" value="1"/>
</dbReference>
<dbReference type="InterPro" id="IPR003844">
    <property type="entry name" value="UPF0060"/>
</dbReference>
<dbReference type="NCBIfam" id="NF002586">
    <property type="entry name" value="PRK02237.1"/>
    <property type="match status" value="1"/>
</dbReference>
<dbReference type="PANTHER" id="PTHR36116">
    <property type="entry name" value="UPF0060 MEMBRANE PROTEIN YNFA"/>
    <property type="match status" value="1"/>
</dbReference>
<dbReference type="PANTHER" id="PTHR36116:SF1">
    <property type="entry name" value="UPF0060 MEMBRANE PROTEIN YNFA"/>
    <property type="match status" value="1"/>
</dbReference>
<dbReference type="Pfam" id="PF02694">
    <property type="entry name" value="UPF0060"/>
    <property type="match status" value="1"/>
</dbReference>
<dbReference type="SUPFAM" id="SSF103481">
    <property type="entry name" value="Multidrug resistance efflux transporter EmrE"/>
    <property type="match status" value="1"/>
</dbReference>
<gene>
    <name type="ordered locus">Mrad2831_0929</name>
</gene>
<feature type="chain" id="PRO_1000089246" description="UPF0060 membrane protein Mrad2831_0929">
    <location>
        <begin position="1"/>
        <end position="106"/>
    </location>
</feature>
<feature type="transmembrane region" description="Helical" evidence="1">
    <location>
        <begin position="3"/>
        <end position="23"/>
    </location>
</feature>
<feature type="transmembrane region" description="Helical" evidence="1">
    <location>
        <begin position="30"/>
        <end position="50"/>
    </location>
</feature>
<feature type="transmembrane region" description="Helical" evidence="1">
    <location>
        <begin position="59"/>
        <end position="79"/>
    </location>
</feature>
<feature type="transmembrane region" description="Helical" evidence="1">
    <location>
        <begin position="87"/>
        <end position="104"/>
    </location>
</feature>
<accession>B1LZP1</accession>
<organism>
    <name type="scientific">Methylobacterium radiotolerans (strain ATCC 27329 / DSM 1819 / JCM 2831 / NBRC 15690 / NCIMB 10815 / 0-1)</name>
    <dbReference type="NCBI Taxonomy" id="426355"/>
    <lineage>
        <taxon>Bacteria</taxon>
        <taxon>Pseudomonadati</taxon>
        <taxon>Pseudomonadota</taxon>
        <taxon>Alphaproteobacteria</taxon>
        <taxon>Hyphomicrobiales</taxon>
        <taxon>Methylobacteriaceae</taxon>
        <taxon>Methylobacterium</taxon>
    </lineage>
</organism>
<evidence type="ECO:0000255" key="1">
    <source>
        <dbReference type="HAMAP-Rule" id="MF_00010"/>
    </source>
</evidence>
<name>Y929_METRJ</name>
<protein>
    <recommendedName>
        <fullName evidence="1">UPF0060 membrane protein Mrad2831_0929</fullName>
    </recommendedName>
</protein>
<reference key="1">
    <citation type="submission" date="2008-03" db="EMBL/GenBank/DDBJ databases">
        <title>Complete sequence of chromosome of Methylobacterium radiotolerans JCM 2831.</title>
        <authorList>
            <consortium name="US DOE Joint Genome Institute"/>
            <person name="Copeland A."/>
            <person name="Lucas S."/>
            <person name="Lapidus A."/>
            <person name="Glavina del Rio T."/>
            <person name="Dalin E."/>
            <person name="Tice H."/>
            <person name="Bruce D."/>
            <person name="Goodwin L."/>
            <person name="Pitluck S."/>
            <person name="Kiss H."/>
            <person name="Brettin T."/>
            <person name="Detter J.C."/>
            <person name="Han C."/>
            <person name="Kuske C.R."/>
            <person name="Schmutz J."/>
            <person name="Larimer F."/>
            <person name="Land M."/>
            <person name="Hauser L."/>
            <person name="Kyrpides N."/>
            <person name="Mikhailova N."/>
            <person name="Marx C.J."/>
            <person name="Richardson P."/>
        </authorList>
    </citation>
    <scope>NUCLEOTIDE SEQUENCE [LARGE SCALE GENOMIC DNA]</scope>
    <source>
        <strain>ATCC 27329 / DSM 1819 / JCM 2831 / NBRC 15690 / NCIMB 10815 / 0-1</strain>
    </source>
</reference>
<sequence>MSLLAYAAAALAEIAGCFAFWAWMRLGRSAWWTLPGLASLAAFAALLTLVDSPAAGRTFAAYGGVYVAASVLWLWLAEGQRPDRWDLAGSAVCLAGTALILLGRRG</sequence>
<keyword id="KW-0997">Cell inner membrane</keyword>
<keyword id="KW-1003">Cell membrane</keyword>
<keyword id="KW-0472">Membrane</keyword>
<keyword id="KW-0812">Transmembrane</keyword>
<keyword id="KW-1133">Transmembrane helix</keyword>